<keyword id="KW-0903">Direct protein sequencing</keyword>
<keyword id="KW-1015">Disulfide bond</keyword>
<keyword id="KW-0325">Glycoprotein</keyword>
<keyword id="KW-0443">Lipid metabolism</keyword>
<keyword id="KW-1185">Reference proteome</keyword>
<keyword id="KW-0746">Sphingolipid metabolism</keyword>
<reference key="1">
    <citation type="journal article" date="1993" name="Biochemistry">
        <title>Porcine cerebroside sulfate activator: further structural characterization and disulfide identification.</title>
        <authorList>
            <person name="Stevens R.L."/>
            <person name="Faull K.F."/>
            <person name="Conklin K.A."/>
            <person name="Green B.N."/>
            <person name="Fluharty A.L."/>
        </authorList>
    </citation>
    <scope>PROTEIN SEQUENCE OF 1-79</scope>
    <scope>DISULFIDE BONDS IN SAPOSIN-B</scope>
    <source>
        <tissue>Kidney</tissue>
    </source>
</reference>
<reference key="2">
    <citation type="journal article" date="1992" name="Biochem. Med. Metab. Biol.">
        <title>The cerebroside sulfate activator from pig kidney: purification and molecular structure.</title>
        <authorList>
            <person name="Fluharty A.L."/>
            <person name="Katona Z."/>
            <person name="Meek W.E."/>
            <person name="Frei K."/>
            <person name="Fowler A.V."/>
        </authorList>
    </citation>
    <scope>PROTEIN SEQUENCE OF 1-64</scope>
    <source>
        <tissue>Kidney</tissue>
    </source>
</reference>
<reference key="3">
    <citation type="journal article" date="1999" name="J. Mass Spectrom.">
        <title>Cerebroside sulfate activator protein (Saposin B): chromatographic and electrospray mass spectrometric properties.</title>
        <authorList>
            <person name="Faull K.F."/>
            <person name="Whitelegge J.P."/>
            <person name="Higginson J."/>
            <person name="To T."/>
            <person name="Johnson J."/>
            <person name="Krutchinsky A.N."/>
            <person name="Standing K.G."/>
            <person name="Waring A.J."/>
            <person name="Stevens R.L."/>
            <person name="Fluharty C.B."/>
            <person name="Fluharty A.L."/>
        </authorList>
    </citation>
    <scope>IDENTIFICATION BY MASS SPECTROMETRY</scope>
    <source>
        <tissue>Kidney</tissue>
    </source>
</reference>
<reference key="4">
    <citation type="journal article" date="2000" name="J. Mass Spectrom.">
        <title>Structure of the asparagine-linked sugar chains of porcine kidney and human urine cerebroside sulfate activator protein.</title>
        <authorList>
            <person name="Faull K.F."/>
            <person name="Johnson J."/>
            <person name="Kim M.J."/>
            <person name="To T."/>
            <person name="Whitelegge J.P."/>
            <person name="Stevens R.L."/>
            <person name="Fluharty C.B."/>
            <person name="Fluharty A.L."/>
        </authorList>
    </citation>
    <scope>GLYCOSYLATION AT ASN-21</scope>
    <scope>STRUCTURE OF CARBOHYDRATE ON ASN-21</scope>
</reference>
<comment type="function">
    <text>Saposin-B stimulates the hydrolysis of galacto-cerebroside sulfate by arylsulfatase A (EC 3.1.6.8), GM1 gangliosides by beta-galactosidase (EC 3.2.1.23) and globotriaosylceramide by alpha-galactosidase A (EC 3.2.1.22). Saposin-B forms a solubilizing complex with the substrates of the sphingolipid hydrolases.</text>
</comment>
<comment type="subunit">
    <text evidence="1 2">Saposin-B is a homodimer. Interacts with GRN; facilitates lysosomal delivery of progranulin from the extracellular space and the biosynthetic pathway (By similarity).</text>
</comment>
<comment type="PTM">
    <text>The one residue extended Saposin-B-Val is only found in a minority of the chains.</text>
</comment>
<dbReference type="PIR" id="A49475">
    <property type="entry name" value="A49475"/>
</dbReference>
<dbReference type="SMR" id="P81405"/>
<dbReference type="STRING" id="9823.ENSSSCP00000035634"/>
<dbReference type="GlyConnect" id="547">
    <property type="glycosylation" value="1 N-Linked glycan (1 site)"/>
</dbReference>
<dbReference type="GlyCosmos" id="P81405">
    <property type="glycosylation" value="1 site, 2 glycans"/>
</dbReference>
<dbReference type="GlyGen" id="P81405">
    <property type="glycosylation" value="1 site"/>
</dbReference>
<dbReference type="PaxDb" id="9823-ENSSSCP00000026917"/>
<dbReference type="PeptideAtlas" id="P81405"/>
<dbReference type="eggNOG" id="KOG1340">
    <property type="taxonomic scope" value="Eukaryota"/>
</dbReference>
<dbReference type="HOGENOM" id="CLU_033757_0_0_1"/>
<dbReference type="InParanoid" id="P81405"/>
<dbReference type="Proteomes" id="UP000008227">
    <property type="component" value="Unplaced"/>
</dbReference>
<dbReference type="Proteomes" id="UP000314985">
    <property type="component" value="Unplaced"/>
</dbReference>
<dbReference type="Proteomes" id="UP000694570">
    <property type="component" value="Unplaced"/>
</dbReference>
<dbReference type="Proteomes" id="UP000694571">
    <property type="component" value="Unplaced"/>
</dbReference>
<dbReference type="Proteomes" id="UP000694720">
    <property type="component" value="Unplaced"/>
</dbReference>
<dbReference type="Proteomes" id="UP000694722">
    <property type="component" value="Unplaced"/>
</dbReference>
<dbReference type="Proteomes" id="UP000694723">
    <property type="component" value="Unplaced"/>
</dbReference>
<dbReference type="Proteomes" id="UP000694724">
    <property type="component" value="Unplaced"/>
</dbReference>
<dbReference type="Proteomes" id="UP000694725">
    <property type="component" value="Unplaced"/>
</dbReference>
<dbReference type="Proteomes" id="UP000694726">
    <property type="component" value="Unplaced"/>
</dbReference>
<dbReference type="Proteomes" id="UP000694727">
    <property type="component" value="Unplaced"/>
</dbReference>
<dbReference type="Proteomes" id="UP000694728">
    <property type="component" value="Unplaced"/>
</dbReference>
<dbReference type="GO" id="GO:0005576">
    <property type="term" value="C:extracellular region"/>
    <property type="evidence" value="ECO:0000250"/>
    <property type="project" value="UniProtKB"/>
</dbReference>
<dbReference type="GO" id="GO:0005770">
    <property type="term" value="C:late endosome"/>
    <property type="evidence" value="ECO:0000250"/>
    <property type="project" value="UniProtKB"/>
</dbReference>
<dbReference type="GO" id="GO:0005764">
    <property type="term" value="C:lysosome"/>
    <property type="evidence" value="ECO:0000250"/>
    <property type="project" value="UniProtKB"/>
</dbReference>
<dbReference type="GO" id="GO:0016020">
    <property type="term" value="C:membrane"/>
    <property type="evidence" value="ECO:0007669"/>
    <property type="project" value="GOC"/>
</dbReference>
<dbReference type="GO" id="GO:0007041">
    <property type="term" value="P:lysosomal transport"/>
    <property type="evidence" value="ECO:0000250"/>
    <property type="project" value="UniProtKB"/>
</dbReference>
<dbReference type="GO" id="GO:0006665">
    <property type="term" value="P:sphingolipid metabolic process"/>
    <property type="evidence" value="ECO:0007669"/>
    <property type="project" value="UniProtKB-KW"/>
</dbReference>
<dbReference type="FunFam" id="1.10.225.10:FF:000004">
    <property type="entry name" value="prosaposin isoform X2"/>
    <property type="match status" value="1"/>
</dbReference>
<dbReference type="Gene3D" id="1.10.225.10">
    <property type="entry name" value="Saposin-like"/>
    <property type="match status" value="1"/>
</dbReference>
<dbReference type="InterPro" id="IPR008138">
    <property type="entry name" value="SapB_2"/>
</dbReference>
<dbReference type="InterPro" id="IPR008373">
    <property type="entry name" value="Saposin"/>
</dbReference>
<dbReference type="InterPro" id="IPR011001">
    <property type="entry name" value="Saposin-like"/>
</dbReference>
<dbReference type="InterPro" id="IPR008139">
    <property type="entry name" value="SaposinB_dom"/>
</dbReference>
<dbReference type="Pfam" id="PF03489">
    <property type="entry name" value="SapB_2"/>
    <property type="match status" value="1"/>
</dbReference>
<dbReference type="PRINTS" id="PR01797">
    <property type="entry name" value="SAPOSIN"/>
</dbReference>
<dbReference type="SMART" id="SM00741">
    <property type="entry name" value="SapB"/>
    <property type="match status" value="1"/>
</dbReference>
<dbReference type="SUPFAM" id="SSF47862">
    <property type="entry name" value="Saposin"/>
    <property type="match status" value="1"/>
</dbReference>
<dbReference type="PROSITE" id="PS50015">
    <property type="entry name" value="SAP_B"/>
    <property type="match status" value="1"/>
</dbReference>
<accession>P81405</accession>
<proteinExistence type="evidence at protein level"/>
<sequence length="80" mass="8949">GDVCQDCIQMVTDLQNAVRTNSTFVEALVNHAKEECDRLGPGMADMCKNYISQYSEIAIQMMMHMQPKDICGLVGFCEEV</sequence>
<gene>
    <name type="primary">PSAP</name>
</gene>
<feature type="chain" id="PRO_0000031627" description="Saposin-B-Val" evidence="5">
    <location>
        <begin position="1"/>
        <end position="80"/>
    </location>
</feature>
<feature type="chain" id="PRO_0000031628" description="Saposin-B" evidence="5">
    <location>
        <begin position="1"/>
        <end position="79"/>
    </location>
</feature>
<feature type="domain" description="Saposin B-type" evidence="3">
    <location>
        <begin position="1"/>
        <end position="80"/>
    </location>
</feature>
<feature type="glycosylation site" id="CAR_000177" description="N-linked (GlcNAc...) (complex) asparagine" evidence="4">
    <location>
        <position position="21"/>
    </location>
</feature>
<feature type="disulfide bond" evidence="5">
    <location>
        <begin position="4"/>
        <end position="77"/>
    </location>
</feature>
<feature type="disulfide bond" evidence="5">
    <location>
        <begin position="7"/>
        <end position="71"/>
    </location>
</feature>
<feature type="disulfide bond" evidence="5">
    <location>
        <begin position="36"/>
        <end position="47"/>
    </location>
</feature>
<organism>
    <name type="scientific">Sus scrofa</name>
    <name type="common">Pig</name>
    <dbReference type="NCBI Taxonomy" id="9823"/>
    <lineage>
        <taxon>Eukaryota</taxon>
        <taxon>Metazoa</taxon>
        <taxon>Chordata</taxon>
        <taxon>Craniata</taxon>
        <taxon>Vertebrata</taxon>
        <taxon>Euteleostomi</taxon>
        <taxon>Mammalia</taxon>
        <taxon>Eutheria</taxon>
        <taxon>Laurasiatheria</taxon>
        <taxon>Artiodactyla</taxon>
        <taxon>Suina</taxon>
        <taxon>Suidae</taxon>
        <taxon>Sus</taxon>
    </lineage>
</organism>
<evidence type="ECO:0000250" key="1"/>
<evidence type="ECO:0000250" key="2">
    <source>
        <dbReference type="UniProtKB" id="P07602"/>
    </source>
</evidence>
<evidence type="ECO:0000255" key="3">
    <source>
        <dbReference type="PROSITE-ProRule" id="PRU00415"/>
    </source>
</evidence>
<evidence type="ECO:0000269" key="4">
    <source>
    </source>
</evidence>
<evidence type="ECO:0000269" key="5">
    <source>
    </source>
</evidence>
<name>SAP_PIG</name>
<protein>
    <recommendedName>
        <fullName>Saposin-B-Val</fullName>
    </recommendedName>
    <component>
        <recommendedName>
            <fullName>Saposin-B</fullName>
        </recommendedName>
        <alternativeName>
            <fullName>Cerebroside sulfate activator</fullName>
            <shortName>CS-ACT</shortName>
        </alternativeName>
        <alternativeName>
            <fullName>Non-specific activator</fullName>
        </alternativeName>
        <alternativeName>
            <fullName>Sphingolipid activator protein 1</fullName>
            <shortName>SAP-1</shortName>
        </alternativeName>
    </component>
</protein>